<sequence length="76" mass="7927">MGAAISQGALIAIVCNGLVGFLLLLLWVILCWACHSRSADVDSLSESSPNSSPGPCPEKAPPPQKPSHEGSYLLQP</sequence>
<feature type="signal peptide" evidence="1">
    <location>
        <begin position="1"/>
        <end position="33"/>
    </location>
</feature>
<feature type="chain" id="PRO_0000292880" description="Adropin">
    <location>
        <begin position="34"/>
        <end position="76"/>
    </location>
</feature>
<feature type="region of interest" description="Disordered" evidence="2">
    <location>
        <begin position="41"/>
        <end position="76"/>
    </location>
</feature>
<feature type="compositionally biased region" description="Pro residues" evidence="2">
    <location>
        <begin position="52"/>
        <end position="65"/>
    </location>
</feature>
<keyword id="KW-1185">Reference proteome</keyword>
<keyword id="KW-0964">Secreted</keyword>
<keyword id="KW-0732">Signal</keyword>
<name>ENHO_MOUSE</name>
<evidence type="ECO:0000255" key="1"/>
<evidence type="ECO:0000256" key="2">
    <source>
        <dbReference type="SAM" id="MobiDB-lite"/>
    </source>
</evidence>
<evidence type="ECO:0000269" key="3">
    <source>
    </source>
</evidence>
<reference key="1">
    <citation type="journal article" date="2004" name="Genome Res.">
        <title>The status, quality, and expansion of the NIH full-length cDNA project: the Mammalian Gene Collection (MGC).</title>
        <authorList>
            <consortium name="The MGC Project Team"/>
        </authorList>
    </citation>
    <scope>NUCLEOTIDE SEQUENCE [LARGE SCALE MRNA]</scope>
    <source>
        <strain>FVB/N</strain>
        <tissue>Liver</tissue>
    </source>
</reference>
<reference key="2">
    <citation type="journal article" date="2008" name="Cell Metab.">
        <title>Identification of adropin as a secreted factor linking dietary macronutrient intake with energy homeostasis and lipid metabolism.</title>
        <authorList>
            <person name="Kumar K.G."/>
            <person name="Trevaskis J.L."/>
            <person name="Lam D.D."/>
            <person name="Sutton G.M."/>
            <person name="Koza R.A."/>
            <person name="Chouljenko V.N."/>
            <person name="Kousoulas K.G."/>
            <person name="Rogers P.M."/>
            <person name="Kesterson R.A."/>
            <person name="Thearle M."/>
            <person name="Ferrante A.W. Jr."/>
            <person name="Mynatt R.L."/>
            <person name="Burris T.P."/>
            <person name="Dong J.Z."/>
            <person name="Halem H.A."/>
            <person name="Culler M.D."/>
            <person name="Heisler L.K."/>
            <person name="Stephens J.M."/>
            <person name="Butler A.A."/>
        </authorList>
    </citation>
    <scope>FUNCTION</scope>
    <scope>SUBCELLULAR LOCATION</scope>
    <scope>TISSUE SPECIFICITY</scope>
    <scope>INDUCTION</scope>
</reference>
<reference key="3">
    <citation type="journal article" date="2010" name="Cell">
        <title>A tissue-specific atlas of mouse protein phosphorylation and expression.</title>
        <authorList>
            <person name="Huttlin E.L."/>
            <person name="Jedrychowski M.P."/>
            <person name="Elias J.E."/>
            <person name="Goswami T."/>
            <person name="Rad R."/>
            <person name="Beausoleil S.A."/>
            <person name="Villen J."/>
            <person name="Haas W."/>
            <person name="Sowa M.E."/>
            <person name="Gygi S.P."/>
        </authorList>
    </citation>
    <scope>IDENTIFICATION BY MASS SPECTROMETRY [LARGE SCALE ANALYSIS]</scope>
    <source>
        <tissue>Brain</tissue>
    </source>
</reference>
<protein>
    <recommendedName>
        <fullName>Adropin</fullName>
    </recommendedName>
    <alternativeName>
        <fullName>Energy homeostasis-associated protein</fullName>
    </alternativeName>
</protein>
<organism>
    <name type="scientific">Mus musculus</name>
    <name type="common">Mouse</name>
    <dbReference type="NCBI Taxonomy" id="10090"/>
    <lineage>
        <taxon>Eukaryota</taxon>
        <taxon>Metazoa</taxon>
        <taxon>Chordata</taxon>
        <taxon>Craniata</taxon>
        <taxon>Vertebrata</taxon>
        <taxon>Euteleostomi</taxon>
        <taxon>Mammalia</taxon>
        <taxon>Eutheria</taxon>
        <taxon>Euarchontoglires</taxon>
        <taxon>Glires</taxon>
        <taxon>Rodentia</taxon>
        <taxon>Myomorpha</taxon>
        <taxon>Muroidea</taxon>
        <taxon>Muridae</taxon>
        <taxon>Murinae</taxon>
        <taxon>Mus</taxon>
        <taxon>Mus</taxon>
    </lineage>
</organism>
<dbReference type="EMBL" id="BC021944">
    <property type="protein sequence ID" value="AAH21944.1"/>
    <property type="molecule type" value="mRNA"/>
</dbReference>
<dbReference type="CCDS" id="CCDS59655.1"/>
<dbReference type="RefSeq" id="NP_081423.1">
    <property type="nucleotide sequence ID" value="NM_027147.1"/>
</dbReference>
<dbReference type="SMR" id="Q8K1D8"/>
<dbReference type="FunCoup" id="Q8K1D8">
    <property type="interactions" value="517"/>
</dbReference>
<dbReference type="STRING" id="10090.ENSMUSP00000137902"/>
<dbReference type="iPTMnet" id="Q8K1D8"/>
<dbReference type="PhosphoSitePlus" id="Q8K1D8"/>
<dbReference type="PaxDb" id="10090-ENSMUSP00000137902"/>
<dbReference type="ProteomicsDB" id="277874"/>
<dbReference type="Antibodypedia" id="25484">
    <property type="antibodies" value="116 antibodies from 20 providers"/>
</dbReference>
<dbReference type="Ensembl" id="ENSMUST00000127306.2">
    <property type="protein sequence ID" value="ENSMUSP00000137902.2"/>
    <property type="gene ID" value="ENSMUSG00000028445.8"/>
</dbReference>
<dbReference type="GeneID" id="69638"/>
<dbReference type="KEGG" id="mmu:69638"/>
<dbReference type="UCSC" id="uc008sjd.2">
    <property type="organism name" value="mouse"/>
</dbReference>
<dbReference type="AGR" id="MGI:1916888"/>
<dbReference type="CTD" id="375704"/>
<dbReference type="MGI" id="MGI:1916888">
    <property type="gene designation" value="Enho"/>
</dbReference>
<dbReference type="VEuPathDB" id="HostDB:ENSMUSG00000028445"/>
<dbReference type="eggNOG" id="ENOG502TDVU">
    <property type="taxonomic scope" value="Eukaryota"/>
</dbReference>
<dbReference type="GeneTree" id="ENSGT00390000001413"/>
<dbReference type="HOGENOM" id="CLU_197690_0_0_1"/>
<dbReference type="InParanoid" id="Q8K1D8"/>
<dbReference type="OMA" id="QKSSHEG"/>
<dbReference type="PhylomeDB" id="Q8K1D8"/>
<dbReference type="BioGRID-ORCS" id="69638">
    <property type="hits" value="0 hits in 75 CRISPR screens"/>
</dbReference>
<dbReference type="PRO" id="PR:Q8K1D8"/>
<dbReference type="Proteomes" id="UP000000589">
    <property type="component" value="Chromosome 4"/>
</dbReference>
<dbReference type="RNAct" id="Q8K1D8">
    <property type="molecule type" value="protein"/>
</dbReference>
<dbReference type="Bgee" id="ENSMUSG00000028445">
    <property type="expression patterns" value="Expressed in otolith organ and 213 other cell types or tissues"/>
</dbReference>
<dbReference type="GO" id="GO:0005576">
    <property type="term" value="C:extracellular region"/>
    <property type="evidence" value="ECO:0007669"/>
    <property type="project" value="UniProtKB-SubCell"/>
</dbReference>
<dbReference type="GO" id="GO:0005886">
    <property type="term" value="C:plasma membrane"/>
    <property type="evidence" value="ECO:0000314"/>
    <property type="project" value="MGI"/>
</dbReference>
<dbReference type="GO" id="GO:0005179">
    <property type="term" value="F:hormone activity"/>
    <property type="evidence" value="ECO:0000315"/>
    <property type="project" value="MGI"/>
</dbReference>
<dbReference type="GO" id="GO:0045747">
    <property type="term" value="P:positive regulation of Notch signaling pathway"/>
    <property type="evidence" value="ECO:0000270"/>
    <property type="project" value="MGI"/>
</dbReference>
<dbReference type="InterPro" id="IPR034461">
    <property type="entry name" value="Adropin"/>
</dbReference>
<dbReference type="PANTHER" id="PTHR38492">
    <property type="entry name" value="ADROPIN"/>
    <property type="match status" value="1"/>
</dbReference>
<dbReference type="PANTHER" id="PTHR38492:SF1">
    <property type="entry name" value="ADROPIN"/>
    <property type="match status" value="1"/>
</dbReference>
<proteinExistence type="evidence at protein level"/>
<accession>Q8K1D8</accession>
<gene>
    <name type="primary">Enho</name>
</gene>
<comment type="function">
    <text evidence="3">Involved in the regulation of glucose homeostasis and lipid metabolism.</text>
</comment>
<comment type="subcellular location">
    <subcellularLocation>
        <location evidence="3">Secreted</location>
    </subcellularLocation>
</comment>
<comment type="tissue specificity">
    <text evidence="3">Expressed in liver and brain. Expressed in regions of the brain involved in metabolic regulation.</text>
</comment>
<comment type="induction">
    <text evidence="3">In liver, up-regulated in mice fed a high-fat diet for 2 days, and down-regulated in obese mice fed a chronic high fat diet. Also down-regulated in liver 4 hours after treatment with LXR agonist GW3965.</text>
</comment>